<gene>
    <name evidence="1" type="primary">rsmG</name>
    <name type="ordered locus">BMA10247_3004</name>
</gene>
<dbReference type="EC" id="2.1.1.170" evidence="1"/>
<dbReference type="EMBL" id="CP000548">
    <property type="protein sequence ID" value="ABO04723.2"/>
    <property type="molecule type" value="Genomic_DNA"/>
</dbReference>
<dbReference type="SMR" id="A3MQI8"/>
<dbReference type="KEGG" id="bmn:BMA10247_3004"/>
<dbReference type="GO" id="GO:0005829">
    <property type="term" value="C:cytosol"/>
    <property type="evidence" value="ECO:0007669"/>
    <property type="project" value="TreeGrafter"/>
</dbReference>
<dbReference type="GO" id="GO:0070043">
    <property type="term" value="F:rRNA (guanine-N7-)-methyltransferase activity"/>
    <property type="evidence" value="ECO:0007669"/>
    <property type="project" value="UniProtKB-UniRule"/>
</dbReference>
<dbReference type="CDD" id="cd02440">
    <property type="entry name" value="AdoMet_MTases"/>
    <property type="match status" value="1"/>
</dbReference>
<dbReference type="Gene3D" id="3.40.50.150">
    <property type="entry name" value="Vaccinia Virus protein VP39"/>
    <property type="match status" value="1"/>
</dbReference>
<dbReference type="HAMAP" id="MF_00074">
    <property type="entry name" value="16SrRNA_methyltr_G"/>
    <property type="match status" value="1"/>
</dbReference>
<dbReference type="InterPro" id="IPR003682">
    <property type="entry name" value="rRNA_ssu_MeTfrase_G"/>
</dbReference>
<dbReference type="InterPro" id="IPR029063">
    <property type="entry name" value="SAM-dependent_MTases_sf"/>
</dbReference>
<dbReference type="NCBIfam" id="TIGR00138">
    <property type="entry name" value="rsmG_gidB"/>
    <property type="match status" value="1"/>
</dbReference>
<dbReference type="PANTHER" id="PTHR31760">
    <property type="entry name" value="S-ADENOSYL-L-METHIONINE-DEPENDENT METHYLTRANSFERASES SUPERFAMILY PROTEIN"/>
    <property type="match status" value="1"/>
</dbReference>
<dbReference type="PANTHER" id="PTHR31760:SF0">
    <property type="entry name" value="S-ADENOSYL-L-METHIONINE-DEPENDENT METHYLTRANSFERASES SUPERFAMILY PROTEIN"/>
    <property type="match status" value="1"/>
</dbReference>
<dbReference type="Pfam" id="PF02527">
    <property type="entry name" value="GidB"/>
    <property type="match status" value="1"/>
</dbReference>
<dbReference type="PIRSF" id="PIRSF003078">
    <property type="entry name" value="GidB"/>
    <property type="match status" value="1"/>
</dbReference>
<dbReference type="SUPFAM" id="SSF53335">
    <property type="entry name" value="S-adenosyl-L-methionine-dependent methyltransferases"/>
    <property type="match status" value="1"/>
</dbReference>
<reference key="1">
    <citation type="journal article" date="2010" name="Genome Biol. Evol.">
        <title>Continuing evolution of Burkholderia mallei through genome reduction and large-scale rearrangements.</title>
        <authorList>
            <person name="Losada L."/>
            <person name="Ronning C.M."/>
            <person name="DeShazer D."/>
            <person name="Woods D."/>
            <person name="Fedorova N."/>
            <person name="Kim H.S."/>
            <person name="Shabalina S.A."/>
            <person name="Pearson T.R."/>
            <person name="Brinkac L."/>
            <person name="Tan P."/>
            <person name="Nandi T."/>
            <person name="Crabtree J."/>
            <person name="Badger J."/>
            <person name="Beckstrom-Sternberg S."/>
            <person name="Saqib M."/>
            <person name="Schutzer S.E."/>
            <person name="Keim P."/>
            <person name="Nierman W.C."/>
        </authorList>
    </citation>
    <scope>NUCLEOTIDE SEQUENCE [LARGE SCALE GENOMIC DNA]</scope>
    <source>
        <strain>NCTC 10247</strain>
    </source>
</reference>
<evidence type="ECO:0000255" key="1">
    <source>
        <dbReference type="HAMAP-Rule" id="MF_00074"/>
    </source>
</evidence>
<feature type="chain" id="PRO_0000335320" description="Ribosomal RNA small subunit methyltransferase G">
    <location>
        <begin position="1"/>
        <end position="230"/>
    </location>
</feature>
<feature type="binding site" evidence="1">
    <location>
        <position position="91"/>
    </location>
    <ligand>
        <name>S-adenosyl-L-methionine</name>
        <dbReference type="ChEBI" id="CHEBI:59789"/>
    </ligand>
</feature>
<feature type="binding site" evidence="1">
    <location>
        <position position="96"/>
    </location>
    <ligand>
        <name>S-adenosyl-L-methionine</name>
        <dbReference type="ChEBI" id="CHEBI:59789"/>
    </ligand>
</feature>
<feature type="binding site" evidence="1">
    <location>
        <begin position="142"/>
        <end position="143"/>
    </location>
    <ligand>
        <name>S-adenosyl-L-methionine</name>
        <dbReference type="ChEBI" id="CHEBI:59789"/>
    </ligand>
</feature>
<feature type="binding site" evidence="1">
    <location>
        <position position="161"/>
    </location>
    <ligand>
        <name>S-adenosyl-L-methionine</name>
        <dbReference type="ChEBI" id="CHEBI:59789"/>
    </ligand>
</feature>
<accession>A3MQI8</accession>
<organism>
    <name type="scientific">Burkholderia mallei (strain NCTC 10247)</name>
    <dbReference type="NCBI Taxonomy" id="320389"/>
    <lineage>
        <taxon>Bacteria</taxon>
        <taxon>Pseudomonadati</taxon>
        <taxon>Pseudomonadota</taxon>
        <taxon>Betaproteobacteria</taxon>
        <taxon>Burkholderiales</taxon>
        <taxon>Burkholderiaceae</taxon>
        <taxon>Burkholderia</taxon>
        <taxon>pseudomallei group</taxon>
    </lineage>
</organism>
<protein>
    <recommendedName>
        <fullName evidence="1">Ribosomal RNA small subunit methyltransferase G</fullName>
        <ecNumber evidence="1">2.1.1.170</ecNumber>
    </recommendedName>
    <alternativeName>
        <fullName evidence="1">16S rRNA 7-methylguanosine methyltransferase</fullName>
        <shortName evidence="1">16S rRNA m7G methyltransferase</shortName>
    </alternativeName>
</protein>
<keyword id="KW-0963">Cytoplasm</keyword>
<keyword id="KW-0489">Methyltransferase</keyword>
<keyword id="KW-0698">rRNA processing</keyword>
<keyword id="KW-0949">S-adenosyl-L-methionine</keyword>
<keyword id="KW-0808">Transferase</keyword>
<comment type="function">
    <text evidence="1">Specifically methylates the N7 position of guanine in position 527 of 16S rRNA.</text>
</comment>
<comment type="catalytic activity">
    <reaction evidence="1">
        <text>guanosine(527) in 16S rRNA + S-adenosyl-L-methionine = N(7)-methylguanosine(527) in 16S rRNA + S-adenosyl-L-homocysteine</text>
        <dbReference type="Rhea" id="RHEA:42732"/>
        <dbReference type="Rhea" id="RHEA-COMP:10209"/>
        <dbReference type="Rhea" id="RHEA-COMP:10210"/>
        <dbReference type="ChEBI" id="CHEBI:57856"/>
        <dbReference type="ChEBI" id="CHEBI:59789"/>
        <dbReference type="ChEBI" id="CHEBI:74269"/>
        <dbReference type="ChEBI" id="CHEBI:74480"/>
        <dbReference type="EC" id="2.1.1.170"/>
    </reaction>
</comment>
<comment type="subcellular location">
    <subcellularLocation>
        <location evidence="1">Cytoplasm</location>
    </subcellularLocation>
</comment>
<comment type="similarity">
    <text evidence="1">Belongs to the methyltransferase superfamily. RNA methyltransferase RsmG family.</text>
</comment>
<proteinExistence type="inferred from homology"/>
<sequence>MQQRRRPPIASRETLQALLSEGAQALGVALSDAQRGALLDYVALLAKWNAVYNLTAIRDPRQMLIQHILDSLSIVPHLGAHGAAAAALDVGSGGGLPGVVLAIALPGWRVTLNDIVHKKSAFQNQAKAELKLGNLSVVTGRVETLRPGADVPAKFDVIVSRAFADLADFVTLARHLVAPGGSIWAMKGVRPDEEIGRLPDGARVKQMIRLTVPSLDAERHLIEVELDEAI</sequence>
<name>RSMG_BURM7</name>